<proteinExistence type="evidence at transcript level"/>
<comment type="function">
    <text evidence="1">Component of the velvet transcription factor complex that controls sexual/asexual developmental ratio in response to light, promoting sexual development in the darkness while stimulating asexual sporulation under illumination (By similarity). The velvet complex acts as a global regulator for secondary metabolite gene expression (By similarity). Component of the velB-VosA heterodimeric complex that plays a dual role in activating genes associated with spore maturation and repressing certain development-associated genes (By similarity). The velB-VosA complex binds DNA through the DNA-binding domain of vosA that recognizes an 11-nucleotide consensus sequence 5'-CTGGCCGCGGC-3' consisting of two motifs in the promoters of key developmental regulatory genes (By similarity).</text>
</comment>
<comment type="subunit">
    <text evidence="1">Component of the heterotrimeric velvet complex composed of laeA, veA and velB; VeA acting as a bridging protein between laeA and velB (By similarity). Forms a heterodimeric complex with vosA; the formation of the velB-vosA complex is light-dependent (By similarity).</text>
</comment>
<comment type="subcellular location">
    <subcellularLocation>
        <location evidence="1">Nucleus</location>
    </subcellularLocation>
    <subcellularLocation>
        <location evidence="1">Cytoplasm</location>
    </subcellularLocation>
    <text evidence="1">Nuclear localization is mediated by veA (By similarity).</text>
</comment>
<comment type="induction">
    <text evidence="4">Expression is down-regulated during fruiting body formation (PubMed:24942908).</text>
</comment>
<comment type="similarity">
    <text evidence="6">Belongs to the velvet family. VelB subfamily.</text>
</comment>
<keyword id="KW-0963">Cytoplasm</keyword>
<keyword id="KW-0539">Nucleus</keyword>
<keyword id="KW-1185">Reference proteome</keyword>
<keyword id="KW-0749">Sporulation</keyword>
<keyword id="KW-0804">Transcription</keyword>
<keyword id="KW-0805">Transcription regulation</keyword>
<organism>
    <name type="scientific">Coprinopsis cinerea (strain Okayama-7 / 130 / ATCC MYA-4618 / FGSC 9003)</name>
    <name type="common">Inky cap fungus</name>
    <name type="synonym">Hormographiella aspergillata</name>
    <dbReference type="NCBI Taxonomy" id="240176"/>
    <lineage>
        <taxon>Eukaryota</taxon>
        <taxon>Fungi</taxon>
        <taxon>Dikarya</taxon>
        <taxon>Basidiomycota</taxon>
        <taxon>Agaricomycotina</taxon>
        <taxon>Agaricomycetes</taxon>
        <taxon>Agaricomycetidae</taxon>
        <taxon>Agaricales</taxon>
        <taxon>Agaricineae</taxon>
        <taxon>Psathyrellaceae</taxon>
        <taxon>Coprinopsis</taxon>
    </lineage>
</organism>
<name>VELB_COPC7</name>
<protein>
    <recommendedName>
        <fullName evidence="6">Velvet complex subunit B</fullName>
    </recommendedName>
</protein>
<dbReference type="EMBL" id="AACS02000005">
    <property type="protein sequence ID" value="EAU84336.1"/>
    <property type="molecule type" value="Genomic_DNA"/>
</dbReference>
<dbReference type="RefSeq" id="XP_001837420.1">
    <property type="nucleotide sequence ID" value="XM_001837368.1"/>
</dbReference>
<dbReference type="SMR" id="A8NYG2"/>
<dbReference type="GeneID" id="6013976"/>
<dbReference type="KEGG" id="cci:CC1G_01332"/>
<dbReference type="VEuPathDB" id="FungiDB:CC1G_01332"/>
<dbReference type="eggNOG" id="ENOG502S1B4">
    <property type="taxonomic scope" value="Eukaryota"/>
</dbReference>
<dbReference type="InParanoid" id="A8NYG2"/>
<dbReference type="OMA" id="MIQKTNA"/>
<dbReference type="OrthoDB" id="1746739at2759"/>
<dbReference type="Proteomes" id="UP000001861">
    <property type="component" value="Unassembled WGS sequence"/>
</dbReference>
<dbReference type="GO" id="GO:0005737">
    <property type="term" value="C:cytoplasm"/>
    <property type="evidence" value="ECO:0007669"/>
    <property type="project" value="UniProtKB-SubCell"/>
</dbReference>
<dbReference type="GO" id="GO:0005634">
    <property type="term" value="C:nucleus"/>
    <property type="evidence" value="ECO:0007669"/>
    <property type="project" value="UniProtKB-SubCell"/>
</dbReference>
<dbReference type="GO" id="GO:0030435">
    <property type="term" value="P:sporulation resulting in formation of a cellular spore"/>
    <property type="evidence" value="ECO:0007669"/>
    <property type="project" value="UniProtKB-KW"/>
</dbReference>
<dbReference type="Gene3D" id="2.60.40.3960">
    <property type="entry name" value="Velvet domain"/>
    <property type="match status" value="1"/>
</dbReference>
<dbReference type="InterPro" id="IPR021740">
    <property type="entry name" value="Velvet"/>
</dbReference>
<dbReference type="InterPro" id="IPR037525">
    <property type="entry name" value="Velvet_dom"/>
</dbReference>
<dbReference type="InterPro" id="IPR038491">
    <property type="entry name" value="Velvet_dom_sf"/>
</dbReference>
<dbReference type="PANTHER" id="PTHR33572">
    <property type="entry name" value="SPORE DEVELOPMENT REGULATOR VOSA"/>
    <property type="match status" value="1"/>
</dbReference>
<dbReference type="PANTHER" id="PTHR33572:SF3">
    <property type="entry name" value="VELVET COMPLEX SUBUNIT B"/>
    <property type="match status" value="1"/>
</dbReference>
<dbReference type="Pfam" id="PF11754">
    <property type="entry name" value="Velvet"/>
    <property type="match status" value="1"/>
</dbReference>
<dbReference type="PROSITE" id="PS51821">
    <property type="entry name" value="VELVET"/>
    <property type="match status" value="1"/>
</dbReference>
<gene>
    <name evidence="5" type="primary">velB</name>
    <name type="ORF">CC1G_01332</name>
</gene>
<sequence>MIVRTEDQKLVDVDDVDCSFFLVTVDLWSADGKQEMNLVLHPSSTDKYAPPNPPTKPSASTTRRRTISSSSRPPGHQASNSSTPAPPRPDEQPPSSNGSGYYPSQSQDNLTPSSPYPPHSNSEQPQTWGYPPPPPIDRAAPFPPPVLPSIQSFNRTASGDWNPSNNDDNYPIDPALRNPEGYTNNAQPDQPTYGSGTTYPPNYQTPPMPPNSGNATPQNNIPRNLATYTRTLVGPLSANACRLLDEHRKPGIFFLFQDLSVRTEGTFRLRMRLMNVGAPPAPEPGSCRVHNDISPILAQTFTEPFIVYSAKRFPGVPDTTALSIAFGNQGQKLPLRNRHGTGSKRRRRNQSGSEGESEDDS</sequence>
<accession>A8NYG2</accession>
<evidence type="ECO:0000250" key="1">
    <source>
        <dbReference type="UniProtKB" id="C8VTS4"/>
    </source>
</evidence>
<evidence type="ECO:0000255" key="2">
    <source>
        <dbReference type="PROSITE-ProRule" id="PRU01165"/>
    </source>
</evidence>
<evidence type="ECO:0000256" key="3">
    <source>
        <dbReference type="SAM" id="MobiDB-lite"/>
    </source>
</evidence>
<evidence type="ECO:0000269" key="4">
    <source>
    </source>
</evidence>
<evidence type="ECO:0000303" key="5">
    <source>
    </source>
</evidence>
<evidence type="ECO:0000305" key="6"/>
<reference key="1">
    <citation type="journal article" date="2010" name="Proc. Natl. Acad. Sci. U.S.A.">
        <title>Insights into evolution of multicellular fungi from the assembled chromosomes of the mushroom Coprinopsis cinerea (Coprinus cinereus).</title>
        <authorList>
            <person name="Stajich J.E."/>
            <person name="Wilke S.K."/>
            <person name="Ahren D."/>
            <person name="Au C.H."/>
            <person name="Birren B.W."/>
            <person name="Borodovsky M."/>
            <person name="Burns C."/>
            <person name="Canbaeck B."/>
            <person name="Casselton L.A."/>
            <person name="Cheng C.K."/>
            <person name="Deng J."/>
            <person name="Dietrich F.S."/>
            <person name="Fargo D.C."/>
            <person name="Farman M.L."/>
            <person name="Gathman A.C."/>
            <person name="Goldberg J."/>
            <person name="Guigo R."/>
            <person name="Hoegger P.J."/>
            <person name="Hooker J.B."/>
            <person name="Huggins A."/>
            <person name="James T.Y."/>
            <person name="Kamada T."/>
            <person name="Kilaru S."/>
            <person name="Kodira C."/>
            <person name="Kuees U."/>
            <person name="Kupfer D."/>
            <person name="Kwan H.S."/>
            <person name="Lomsadze A."/>
            <person name="Li W."/>
            <person name="Lilly W.W."/>
            <person name="Ma L.-J."/>
            <person name="Mackey A.J."/>
            <person name="Manning G."/>
            <person name="Martin F."/>
            <person name="Muraguchi H."/>
            <person name="Natvig D.O."/>
            <person name="Palmerini H."/>
            <person name="Ramesh M.A."/>
            <person name="Rehmeyer C.J."/>
            <person name="Roe B.A."/>
            <person name="Shenoy N."/>
            <person name="Stanke M."/>
            <person name="Ter-Hovhannisyan V."/>
            <person name="Tunlid A."/>
            <person name="Velagapudi R."/>
            <person name="Vision T.J."/>
            <person name="Zeng Q."/>
            <person name="Zolan M.E."/>
            <person name="Pukkila P.J."/>
        </authorList>
    </citation>
    <scope>NUCLEOTIDE SEQUENCE [LARGE SCALE GENOMIC DNA]</scope>
    <source>
        <strain>Okayama-7 / 130 / ATCC MYA-4618 / FGSC 9003</strain>
    </source>
</reference>
<reference key="2">
    <citation type="journal article" date="2014" name="BMC Genomics">
        <title>Comparative transcriptomics of the model mushroom Coprinopsis cinerea reveals tissue-specific armories and a conserved circuitry for sexual development.</title>
        <authorList>
            <person name="Plaza D.F."/>
            <person name="Lin C.W."/>
            <person name="van der Velden N.S."/>
            <person name="Aebi M."/>
            <person name="Kuenzler M."/>
        </authorList>
    </citation>
    <scope>INDUCTION</scope>
</reference>
<feature type="chain" id="PRO_0000435911" description="Velvet complex subunit B">
    <location>
        <begin position="1"/>
        <end position="361"/>
    </location>
</feature>
<feature type="domain" description="Velvet" evidence="2">
    <location>
        <begin position="1"/>
        <end position="336"/>
    </location>
</feature>
<feature type="region of interest" description="Disordered" evidence="3">
    <location>
        <begin position="42"/>
        <end position="222"/>
    </location>
</feature>
<feature type="region of interest" description="Disordered" evidence="3">
    <location>
        <begin position="327"/>
        <end position="361"/>
    </location>
</feature>
<feature type="compositionally biased region" description="Low complexity" evidence="3">
    <location>
        <begin position="57"/>
        <end position="74"/>
    </location>
</feature>
<feature type="compositionally biased region" description="Low complexity" evidence="3">
    <location>
        <begin position="93"/>
        <end position="107"/>
    </location>
</feature>
<feature type="compositionally biased region" description="Polar residues" evidence="3">
    <location>
        <begin position="108"/>
        <end position="127"/>
    </location>
</feature>
<feature type="compositionally biased region" description="Pro residues" evidence="3">
    <location>
        <begin position="130"/>
        <end position="147"/>
    </location>
</feature>
<feature type="compositionally biased region" description="Polar residues" evidence="3">
    <location>
        <begin position="149"/>
        <end position="168"/>
    </location>
</feature>
<feature type="compositionally biased region" description="Polar residues" evidence="3">
    <location>
        <begin position="181"/>
        <end position="196"/>
    </location>
</feature>
<feature type="compositionally biased region" description="Polar residues" evidence="3">
    <location>
        <begin position="212"/>
        <end position="222"/>
    </location>
</feature>
<feature type="compositionally biased region" description="Basic residues" evidence="3">
    <location>
        <begin position="335"/>
        <end position="349"/>
    </location>
</feature>